<dbReference type="EMBL" id="AF305087">
    <property type="protein sequence ID" value="AAK32109.1"/>
    <property type="molecule type" value="mRNA"/>
</dbReference>
<dbReference type="EMBL" id="AF305088">
    <property type="protein sequence ID" value="AAK32110.1"/>
    <property type="molecule type" value="mRNA"/>
</dbReference>
<dbReference type="EMBL" id="AF305089">
    <property type="protein sequence ID" value="AAK32111.1"/>
    <property type="molecule type" value="mRNA"/>
</dbReference>
<dbReference type="EMBL" id="AF305090">
    <property type="protein sequence ID" value="AAK32112.1"/>
    <property type="molecule type" value="mRNA"/>
</dbReference>
<dbReference type="EMBL" id="BC004660">
    <property type="protein sequence ID" value="AAH04660.1"/>
    <property type="molecule type" value="mRNA"/>
</dbReference>
<dbReference type="EMBL" id="AK087817">
    <property type="protein sequence ID" value="BAC40012.1"/>
    <property type="molecule type" value="mRNA"/>
</dbReference>
<dbReference type="EMBL" id="AK013080">
    <property type="protein sequence ID" value="BAE43236.1"/>
    <property type="molecule type" value="mRNA"/>
</dbReference>
<dbReference type="CCDS" id="CCDS89316.1">
    <molecule id="Q99MS7-2"/>
</dbReference>
<dbReference type="RefSeq" id="NP_444482.2">
    <property type="nucleotide sequence ID" value="NM_053252.3"/>
</dbReference>
<dbReference type="SMR" id="Q99MS7"/>
<dbReference type="BioGRID" id="227759">
    <property type="interactions" value="11"/>
</dbReference>
<dbReference type="FunCoup" id="Q99MS7">
    <property type="interactions" value="164"/>
</dbReference>
<dbReference type="STRING" id="10090.ENSMUSP00000037656"/>
<dbReference type="GlyGen" id="Q99MS7">
    <property type="glycosylation" value="2 sites, 1 O-linked glycan (1 site)"/>
</dbReference>
<dbReference type="iPTMnet" id="Q99MS7"/>
<dbReference type="PhosphoSitePlus" id="Q99MS7"/>
<dbReference type="jPOST" id="Q99MS7"/>
<dbReference type="PaxDb" id="10090-ENSMUSP00000037656"/>
<dbReference type="PeptideAtlas" id="Q99MS7"/>
<dbReference type="ProteomicsDB" id="277807">
    <molecule id="Q99MS7-1"/>
</dbReference>
<dbReference type="ProteomicsDB" id="277808">
    <molecule id="Q99MS7-2"/>
</dbReference>
<dbReference type="ProteomicsDB" id="277809">
    <molecule id="Q99MS7-3"/>
</dbReference>
<dbReference type="ProteomicsDB" id="277810">
    <molecule id="Q99MS7-4"/>
</dbReference>
<dbReference type="ProteomicsDB" id="277811">
    <molecule id="Q99MS7-5"/>
</dbReference>
<dbReference type="Pumba" id="Q99MS7"/>
<dbReference type="DNASU" id="114601"/>
<dbReference type="GeneID" id="114601"/>
<dbReference type="KEGG" id="mmu:114601"/>
<dbReference type="UCSC" id="uc008gev.2">
    <molecule id="Q99MS7-2"/>
    <property type="organism name" value="mouse"/>
</dbReference>
<dbReference type="AGR" id="MGI:3612340"/>
<dbReference type="CTD" id="254102"/>
<dbReference type="MGI" id="MGI:3612340">
    <property type="gene designation" value="Ehbp1l1"/>
</dbReference>
<dbReference type="eggNOG" id="KOG0035">
    <property type="taxonomic scope" value="Eukaryota"/>
</dbReference>
<dbReference type="InParanoid" id="Q99MS7"/>
<dbReference type="OrthoDB" id="5972258at2759"/>
<dbReference type="PhylomeDB" id="Q99MS7"/>
<dbReference type="BioGRID-ORCS" id="114601">
    <property type="hits" value="3 hits in 77 CRISPR screens"/>
</dbReference>
<dbReference type="ChiTaRS" id="Ehbp1l1">
    <property type="organism name" value="mouse"/>
</dbReference>
<dbReference type="PRO" id="PR:Q99MS7"/>
<dbReference type="Proteomes" id="UP000000589">
    <property type="component" value="Unplaced"/>
</dbReference>
<dbReference type="RNAct" id="Q99MS7">
    <property type="molecule type" value="protein"/>
</dbReference>
<dbReference type="GO" id="GO:0055037">
    <property type="term" value="C:recycling endosome"/>
    <property type="evidence" value="ECO:0007669"/>
    <property type="project" value="UniProtKB-SubCell"/>
</dbReference>
<dbReference type="GO" id="GO:0000902">
    <property type="term" value="P:cell morphogenesis"/>
    <property type="evidence" value="ECO:0000315"/>
    <property type="project" value="MGI"/>
</dbReference>
<dbReference type="GO" id="GO:0090601">
    <property type="term" value="P:enucleation"/>
    <property type="evidence" value="ECO:0000315"/>
    <property type="project" value="MGI"/>
</dbReference>
<dbReference type="GO" id="GO:0030218">
    <property type="term" value="P:erythrocyte differentiation"/>
    <property type="evidence" value="ECO:0000315"/>
    <property type="project" value="MGI"/>
</dbReference>
<dbReference type="GO" id="GO:0007163">
    <property type="term" value="P:establishment or maintenance of cell polarity"/>
    <property type="evidence" value="ECO:0000315"/>
    <property type="project" value="MGI"/>
</dbReference>
<dbReference type="GO" id="GO:0051646">
    <property type="term" value="P:mitochondrion localization"/>
    <property type="evidence" value="ECO:0000315"/>
    <property type="project" value="MGI"/>
</dbReference>
<dbReference type="GO" id="GO:0051647">
    <property type="term" value="P:nucleus localization"/>
    <property type="evidence" value="ECO:0000315"/>
    <property type="project" value="MGI"/>
</dbReference>
<dbReference type="GO" id="GO:0009791">
    <property type="term" value="P:post-embryonic development"/>
    <property type="evidence" value="ECO:0000315"/>
    <property type="project" value="MGI"/>
</dbReference>
<dbReference type="CDD" id="cd21255">
    <property type="entry name" value="CH_EHBP1L1"/>
    <property type="match status" value="1"/>
</dbReference>
<dbReference type="FunFam" id="1.10.418.10:FF:000023">
    <property type="entry name" value="EH domain-binding protein 1 isoform X1"/>
    <property type="match status" value="1"/>
</dbReference>
<dbReference type="Gene3D" id="1.10.418.10">
    <property type="entry name" value="Calponin-like domain"/>
    <property type="match status" value="1"/>
</dbReference>
<dbReference type="InterPro" id="IPR022735">
    <property type="entry name" value="bMERB_dom"/>
</dbReference>
<dbReference type="InterPro" id="IPR001715">
    <property type="entry name" value="CH_dom"/>
</dbReference>
<dbReference type="InterPro" id="IPR036872">
    <property type="entry name" value="CH_dom_sf"/>
</dbReference>
<dbReference type="InterPro" id="IPR050540">
    <property type="entry name" value="F-actin_Monoox_Mical"/>
</dbReference>
<dbReference type="InterPro" id="IPR019448">
    <property type="entry name" value="NT-C2"/>
</dbReference>
<dbReference type="PANTHER" id="PTHR23167">
    <property type="entry name" value="CALPONIN HOMOLOGY DOMAIN-CONTAINING PROTEIN DDB_G0272472-RELATED"/>
    <property type="match status" value="1"/>
</dbReference>
<dbReference type="PANTHER" id="PTHR23167:SF42">
    <property type="entry name" value="EH DOMAIN-BINDING PROTEIN 1-LIKE PROTEIN 1"/>
    <property type="match status" value="1"/>
</dbReference>
<dbReference type="Pfam" id="PF12130">
    <property type="entry name" value="bMERB_dom"/>
    <property type="match status" value="1"/>
</dbReference>
<dbReference type="Pfam" id="PF00307">
    <property type="entry name" value="CH"/>
    <property type="match status" value="1"/>
</dbReference>
<dbReference type="Pfam" id="PF10358">
    <property type="entry name" value="NT-C2"/>
    <property type="match status" value="1"/>
</dbReference>
<dbReference type="SMART" id="SM00033">
    <property type="entry name" value="CH"/>
    <property type="match status" value="1"/>
</dbReference>
<dbReference type="SMART" id="SM01203">
    <property type="entry name" value="DUF3585"/>
    <property type="match status" value="1"/>
</dbReference>
<dbReference type="SUPFAM" id="SSF47576">
    <property type="entry name" value="Calponin-homology domain, CH-domain"/>
    <property type="match status" value="1"/>
</dbReference>
<dbReference type="PROSITE" id="PS51848">
    <property type="entry name" value="BMERB"/>
    <property type="match status" value="1"/>
</dbReference>
<dbReference type="PROSITE" id="PS51840">
    <property type="entry name" value="C2_NT"/>
    <property type="match status" value="1"/>
</dbReference>
<dbReference type="PROSITE" id="PS50021">
    <property type="entry name" value="CH"/>
    <property type="match status" value="1"/>
</dbReference>
<organism>
    <name type="scientific">Mus musculus</name>
    <name type="common">Mouse</name>
    <dbReference type="NCBI Taxonomy" id="10090"/>
    <lineage>
        <taxon>Eukaryota</taxon>
        <taxon>Metazoa</taxon>
        <taxon>Chordata</taxon>
        <taxon>Craniata</taxon>
        <taxon>Vertebrata</taxon>
        <taxon>Euteleostomi</taxon>
        <taxon>Mammalia</taxon>
        <taxon>Eutheria</taxon>
        <taxon>Euarchontoglires</taxon>
        <taxon>Glires</taxon>
        <taxon>Rodentia</taxon>
        <taxon>Myomorpha</taxon>
        <taxon>Muroidea</taxon>
        <taxon>Muridae</taxon>
        <taxon>Murinae</taxon>
        <taxon>Mus</taxon>
        <taxon>Mus</taxon>
    </lineage>
</organism>
<feature type="chain" id="PRO_0000285205" description="EH domain-binding protein 1-like protein 1">
    <location>
        <begin position="1"/>
        <end position="1716"/>
    </location>
</feature>
<feature type="domain" description="C2 NT-type" evidence="4">
    <location>
        <begin position="8"/>
        <end position="157"/>
    </location>
</feature>
<feature type="domain" description="Calponin-homology (CH)" evidence="3">
    <location>
        <begin position="1211"/>
        <end position="1316"/>
    </location>
</feature>
<feature type="domain" description="bMERB" evidence="5">
    <location>
        <begin position="1542"/>
        <end position="1694"/>
    </location>
</feature>
<feature type="region of interest" description="Disordered" evidence="6">
    <location>
        <begin position="174"/>
        <end position="560"/>
    </location>
</feature>
<feature type="region of interest" description="Disordered" evidence="6">
    <location>
        <begin position="598"/>
        <end position="617"/>
    </location>
</feature>
<feature type="region of interest" description="Disordered" evidence="6">
    <location>
        <begin position="1173"/>
        <end position="1210"/>
    </location>
</feature>
<feature type="region of interest" description="Disordered" evidence="6">
    <location>
        <begin position="1382"/>
        <end position="1543"/>
    </location>
</feature>
<feature type="region of interest" description="Interaction with BIN1 and AMPH" evidence="7">
    <location>
        <begin position="1399"/>
        <end position="1549"/>
    </location>
</feature>
<feature type="coiled-coil region" evidence="2">
    <location>
        <begin position="1005"/>
        <end position="1033"/>
    </location>
</feature>
<feature type="coiled-coil region" evidence="2">
    <location>
        <begin position="1558"/>
        <end position="1707"/>
    </location>
</feature>
<feature type="short sequence motif" description="CAAX motif" evidence="1">
    <location>
        <begin position="1713"/>
        <end position="1716"/>
    </location>
</feature>
<feature type="compositionally biased region" description="Acidic residues" evidence="6">
    <location>
        <begin position="187"/>
        <end position="196"/>
    </location>
</feature>
<feature type="compositionally biased region" description="Polar residues" evidence="6">
    <location>
        <begin position="338"/>
        <end position="350"/>
    </location>
</feature>
<feature type="compositionally biased region" description="Basic and acidic residues" evidence="6">
    <location>
        <begin position="351"/>
        <end position="380"/>
    </location>
</feature>
<feature type="compositionally biased region" description="Basic and acidic residues" evidence="6">
    <location>
        <begin position="394"/>
        <end position="403"/>
    </location>
</feature>
<feature type="compositionally biased region" description="Basic and acidic residues" evidence="6">
    <location>
        <begin position="413"/>
        <end position="432"/>
    </location>
</feature>
<feature type="compositionally biased region" description="Basic and acidic residues" evidence="6">
    <location>
        <begin position="479"/>
        <end position="490"/>
    </location>
</feature>
<feature type="compositionally biased region" description="Basic and acidic residues" evidence="6">
    <location>
        <begin position="542"/>
        <end position="560"/>
    </location>
</feature>
<feature type="compositionally biased region" description="Low complexity" evidence="6">
    <location>
        <begin position="1491"/>
        <end position="1509"/>
    </location>
</feature>
<feature type="compositionally biased region" description="Pro residues" evidence="6">
    <location>
        <begin position="1516"/>
        <end position="1533"/>
    </location>
</feature>
<feature type="modified residue" description="Phosphoserine" evidence="1">
    <location>
        <position position="170"/>
    </location>
</feature>
<feature type="modified residue" description="Phosphoserine" evidence="1">
    <location>
        <position position="173"/>
    </location>
</feature>
<feature type="modified residue" description="Phosphoserine" evidence="1">
    <location>
        <position position="191"/>
    </location>
</feature>
<feature type="modified residue" description="Phosphothreonine" evidence="13">
    <location>
        <position position="278"/>
    </location>
</feature>
<feature type="modified residue" description="Phosphoserine" evidence="1">
    <location>
        <position position="310"/>
    </location>
</feature>
<feature type="modified residue" description="Phosphoserine" evidence="1">
    <location>
        <position position="367"/>
    </location>
</feature>
<feature type="modified residue" description="Phosphoserine" evidence="1">
    <location>
        <position position="424"/>
    </location>
</feature>
<feature type="modified residue" description="Phosphothreonine" evidence="13">
    <location>
        <position position="448"/>
    </location>
</feature>
<feature type="modified residue" description="Phosphoserine" evidence="13">
    <location>
        <position position="1074"/>
    </location>
</feature>
<feature type="modified residue" description="Phosphoserine" evidence="1">
    <location>
        <position position="1135"/>
    </location>
</feature>
<feature type="modified residue" description="Phosphoserine" evidence="1">
    <location>
        <position position="1342"/>
    </location>
</feature>
<feature type="modified residue" description="Phosphoserine" evidence="12 13">
    <location>
        <position position="1444"/>
    </location>
</feature>
<feature type="modified residue" description="Phosphoserine" evidence="12">
    <location>
        <position position="1460"/>
    </location>
</feature>
<feature type="splice variant" id="VSP_024837" description="In isoform 5." evidence="10">
    <original>S</original>
    <variation>SGRGCAPRLGRFP</variation>
    <location>
        <position position="211"/>
    </location>
</feature>
<feature type="splice variant" id="VSP_024838" description="In isoform 4 and isoform 5." evidence="10">
    <location>
        <begin position="249"/>
        <end position="1205"/>
    </location>
</feature>
<feature type="splice variant" id="VSP_024839" description="In isoform 2 and isoform 3." evidence="8 9 10">
    <location>
        <begin position="365"/>
        <end position="1206"/>
    </location>
</feature>
<feature type="splice variant" id="VSP_024840" description="In isoform 2." evidence="9">
    <original>V</original>
    <variation>VSGV</variation>
    <location>
        <position position="1438"/>
    </location>
</feature>
<feature type="sequence conflict" description="In Ref. 3; BAC40012." evidence="11" ref="3">
    <original>G</original>
    <variation>W</variation>
    <location>
        <position position="155"/>
    </location>
</feature>
<feature type="sequence conflict" description="In Ref. 1; AAK32110, 2; AAH04660 and 3; BAC40012." evidence="11" ref="1 2 3">
    <original>V</original>
    <variation>A</variation>
    <location>
        <position position="364"/>
    </location>
</feature>
<feature type="sequence conflict" description="In Ref. 3; BAC40012." evidence="11" ref="3">
    <original>V</original>
    <variation>A</variation>
    <location>
        <position position="1522"/>
    </location>
</feature>
<feature type="sequence conflict" description="In Ref. 3; BAC40012." evidence="11" ref="3">
    <original>A</original>
    <variation>T</variation>
    <location>
        <position position="1544"/>
    </location>
</feature>
<reference key="1">
    <citation type="submission" date="2000-09" db="EMBL/GenBank/DDBJ databases">
        <title>Tangerin, a novel Golgi-associated protein with calponin-homology domain and CAAX-box.</title>
        <authorList>
            <person name="Melichar J.M."/>
            <person name="Noegel A.A."/>
            <person name="Korenbaum E."/>
        </authorList>
    </citation>
    <scope>NUCLEOTIDE SEQUENCE [MRNA] (ISOFORMS 1; 3; 4 AND 5)</scope>
    <source>
        <strain>BALB/cJ</strain>
    </source>
</reference>
<reference key="2">
    <citation type="journal article" date="2004" name="Genome Res.">
        <title>The status, quality, and expansion of the NIH full-length cDNA project: the Mammalian Gene Collection (MGC).</title>
        <authorList>
            <consortium name="The MGC Project Team"/>
        </authorList>
    </citation>
    <scope>NUCLEOTIDE SEQUENCE [LARGE SCALE MRNA] (ISOFORM 3)</scope>
    <source>
        <strain>FVB/N</strain>
        <tissue>Mammary tumor</tissue>
    </source>
</reference>
<reference key="3">
    <citation type="journal article" date="2005" name="Science">
        <title>The transcriptional landscape of the mammalian genome.</title>
        <authorList>
            <person name="Carninci P."/>
            <person name="Kasukawa T."/>
            <person name="Katayama S."/>
            <person name="Gough J."/>
            <person name="Frith M.C."/>
            <person name="Maeda N."/>
            <person name="Oyama R."/>
            <person name="Ravasi T."/>
            <person name="Lenhard B."/>
            <person name="Wells C."/>
            <person name="Kodzius R."/>
            <person name="Shimokawa K."/>
            <person name="Bajic V.B."/>
            <person name="Brenner S.E."/>
            <person name="Batalov S."/>
            <person name="Forrest A.R."/>
            <person name="Zavolan M."/>
            <person name="Davis M.J."/>
            <person name="Wilming L.G."/>
            <person name="Aidinis V."/>
            <person name="Allen J.E."/>
            <person name="Ambesi-Impiombato A."/>
            <person name="Apweiler R."/>
            <person name="Aturaliya R.N."/>
            <person name="Bailey T.L."/>
            <person name="Bansal M."/>
            <person name="Baxter L."/>
            <person name="Beisel K.W."/>
            <person name="Bersano T."/>
            <person name="Bono H."/>
            <person name="Chalk A.M."/>
            <person name="Chiu K.P."/>
            <person name="Choudhary V."/>
            <person name="Christoffels A."/>
            <person name="Clutterbuck D.R."/>
            <person name="Crowe M.L."/>
            <person name="Dalla E."/>
            <person name="Dalrymple B.P."/>
            <person name="de Bono B."/>
            <person name="Della Gatta G."/>
            <person name="di Bernardo D."/>
            <person name="Down T."/>
            <person name="Engstrom P."/>
            <person name="Fagiolini M."/>
            <person name="Faulkner G."/>
            <person name="Fletcher C.F."/>
            <person name="Fukushima T."/>
            <person name="Furuno M."/>
            <person name="Futaki S."/>
            <person name="Gariboldi M."/>
            <person name="Georgii-Hemming P."/>
            <person name="Gingeras T.R."/>
            <person name="Gojobori T."/>
            <person name="Green R.E."/>
            <person name="Gustincich S."/>
            <person name="Harbers M."/>
            <person name="Hayashi Y."/>
            <person name="Hensch T.K."/>
            <person name="Hirokawa N."/>
            <person name="Hill D."/>
            <person name="Huminiecki L."/>
            <person name="Iacono M."/>
            <person name="Ikeo K."/>
            <person name="Iwama A."/>
            <person name="Ishikawa T."/>
            <person name="Jakt M."/>
            <person name="Kanapin A."/>
            <person name="Katoh M."/>
            <person name="Kawasawa Y."/>
            <person name="Kelso J."/>
            <person name="Kitamura H."/>
            <person name="Kitano H."/>
            <person name="Kollias G."/>
            <person name="Krishnan S.P."/>
            <person name="Kruger A."/>
            <person name="Kummerfeld S.K."/>
            <person name="Kurochkin I.V."/>
            <person name="Lareau L.F."/>
            <person name="Lazarevic D."/>
            <person name="Lipovich L."/>
            <person name="Liu J."/>
            <person name="Liuni S."/>
            <person name="McWilliam S."/>
            <person name="Madan Babu M."/>
            <person name="Madera M."/>
            <person name="Marchionni L."/>
            <person name="Matsuda H."/>
            <person name="Matsuzawa S."/>
            <person name="Miki H."/>
            <person name="Mignone F."/>
            <person name="Miyake S."/>
            <person name="Morris K."/>
            <person name="Mottagui-Tabar S."/>
            <person name="Mulder N."/>
            <person name="Nakano N."/>
            <person name="Nakauchi H."/>
            <person name="Ng P."/>
            <person name="Nilsson R."/>
            <person name="Nishiguchi S."/>
            <person name="Nishikawa S."/>
            <person name="Nori F."/>
            <person name="Ohara O."/>
            <person name="Okazaki Y."/>
            <person name="Orlando V."/>
            <person name="Pang K.C."/>
            <person name="Pavan W.J."/>
            <person name="Pavesi G."/>
            <person name="Pesole G."/>
            <person name="Petrovsky N."/>
            <person name="Piazza S."/>
            <person name="Reed J."/>
            <person name="Reid J.F."/>
            <person name="Ring B.Z."/>
            <person name="Ringwald M."/>
            <person name="Rost B."/>
            <person name="Ruan Y."/>
            <person name="Salzberg S.L."/>
            <person name="Sandelin A."/>
            <person name="Schneider C."/>
            <person name="Schoenbach C."/>
            <person name="Sekiguchi K."/>
            <person name="Semple C.A."/>
            <person name="Seno S."/>
            <person name="Sessa L."/>
            <person name="Sheng Y."/>
            <person name="Shibata Y."/>
            <person name="Shimada H."/>
            <person name="Shimada K."/>
            <person name="Silva D."/>
            <person name="Sinclair B."/>
            <person name="Sperling S."/>
            <person name="Stupka E."/>
            <person name="Sugiura K."/>
            <person name="Sultana R."/>
            <person name="Takenaka Y."/>
            <person name="Taki K."/>
            <person name="Tammoja K."/>
            <person name="Tan S.L."/>
            <person name="Tang S."/>
            <person name="Taylor M.S."/>
            <person name="Tegner J."/>
            <person name="Teichmann S.A."/>
            <person name="Ueda H.R."/>
            <person name="van Nimwegen E."/>
            <person name="Verardo R."/>
            <person name="Wei C.L."/>
            <person name="Yagi K."/>
            <person name="Yamanishi H."/>
            <person name="Zabarovsky E."/>
            <person name="Zhu S."/>
            <person name="Zimmer A."/>
            <person name="Hide W."/>
            <person name="Bult C."/>
            <person name="Grimmond S.M."/>
            <person name="Teasdale R.D."/>
            <person name="Liu E.T."/>
            <person name="Brusic V."/>
            <person name="Quackenbush J."/>
            <person name="Wahlestedt C."/>
            <person name="Mattick J.S."/>
            <person name="Hume D.A."/>
            <person name="Kai C."/>
            <person name="Sasaki D."/>
            <person name="Tomaru Y."/>
            <person name="Fukuda S."/>
            <person name="Kanamori-Katayama M."/>
            <person name="Suzuki M."/>
            <person name="Aoki J."/>
            <person name="Arakawa T."/>
            <person name="Iida J."/>
            <person name="Imamura K."/>
            <person name="Itoh M."/>
            <person name="Kato T."/>
            <person name="Kawaji H."/>
            <person name="Kawagashira N."/>
            <person name="Kawashima T."/>
            <person name="Kojima M."/>
            <person name="Kondo S."/>
            <person name="Konno H."/>
            <person name="Nakano K."/>
            <person name="Ninomiya N."/>
            <person name="Nishio T."/>
            <person name="Okada M."/>
            <person name="Plessy C."/>
            <person name="Shibata K."/>
            <person name="Shiraki T."/>
            <person name="Suzuki S."/>
            <person name="Tagami M."/>
            <person name="Waki K."/>
            <person name="Watahiki A."/>
            <person name="Okamura-Oho Y."/>
            <person name="Suzuki H."/>
            <person name="Kawai J."/>
            <person name="Hayashizaki Y."/>
        </authorList>
    </citation>
    <scope>NUCLEOTIDE SEQUENCE [LARGE SCALE MRNA] OF 155-1716 (ISOFORM 2)</scope>
    <source>
        <strain>C57BL/6J</strain>
        <tissue>Ovary</tissue>
    </source>
</reference>
<reference key="4">
    <citation type="journal article" date="2009" name="Immunity">
        <title>The phagosomal proteome in interferon-gamma-activated macrophages.</title>
        <authorList>
            <person name="Trost M."/>
            <person name="English L."/>
            <person name="Lemieux S."/>
            <person name="Courcelles M."/>
            <person name="Desjardins M."/>
            <person name="Thibault P."/>
        </authorList>
    </citation>
    <scope>PHOSPHORYLATION [LARGE SCALE ANALYSIS] AT SER-1444 AND SER-1460</scope>
    <scope>IDENTIFICATION BY MASS SPECTROMETRY [LARGE SCALE ANALYSIS]</scope>
</reference>
<reference key="5">
    <citation type="journal article" date="2010" name="Cell">
        <title>A tissue-specific atlas of mouse protein phosphorylation and expression.</title>
        <authorList>
            <person name="Huttlin E.L."/>
            <person name="Jedrychowski M.P."/>
            <person name="Elias J.E."/>
            <person name="Goswami T."/>
            <person name="Rad R."/>
            <person name="Beausoleil S.A."/>
            <person name="Villen J."/>
            <person name="Haas W."/>
            <person name="Sowa M.E."/>
            <person name="Gygi S.P."/>
        </authorList>
    </citation>
    <scope>PHOSPHORYLATION [LARGE SCALE ANALYSIS] AT THR-278; THR-448; SER-1074 AND SER-1444</scope>
    <scope>IDENTIFICATION BY MASS SPECTROMETRY [LARGE SCALE ANALYSIS]</scope>
    <source>
        <tissue>Brown adipose tissue</tissue>
        <tissue>Heart</tissue>
        <tissue>Kidney</tissue>
        <tissue>Lung</tissue>
        <tissue>Spleen</tissue>
    </source>
</reference>
<reference key="6">
    <citation type="journal article" date="2016" name="J. Cell Biol.">
        <title>EHBP1L1 coordinates Rab8 and Bin1 to regulate apical-directed transport in polarized epithelial cells.</title>
        <authorList>
            <person name="Nakajo A."/>
            <person name="Yoshimura S."/>
            <person name="Togawa H."/>
            <person name="Kunii M."/>
            <person name="Iwano T."/>
            <person name="Izumi A."/>
            <person name="Noguchi Y."/>
            <person name="Watanabe A."/>
            <person name="Goto A."/>
            <person name="Sato T."/>
            <person name="Harada A."/>
        </authorList>
    </citation>
    <scope>FUNCTION</scope>
    <scope>SUBCELLULAR LOCATION</scope>
    <scope>INTERACTION WITH RAB8A; RAB8B; RAB10; RAB13; BIN1; AMPH AND DNM1</scope>
</reference>
<proteinExistence type="evidence at protein level"/>
<sequence>MTSVWKRLQRVGKRAAKFQFVACYHELVLECTKKWQPDKLVVVWTRRNRRICSKAHSWQPGIQNPYRGTVVWMVPENVDISVTLYRDPHVDQYETKEWTFIIENESKGQRKVLATVDVNLAHHAGPVPAQVPLRLRLKPKSVKVVHAELSLTLSGVLLREGRATDDDMQSLASLMSVKPSDVGNLDDFAESDEEEANGPGAPEVRTRGPQSDLSRELKTLCEEEDEGHIRPQQAAARPSSAEDTSPAPVSAPAPPVRAFRGQGSEPAAITGGQVGPETPEPPPSPPETRSTGQPGQTMVPTPAPRLRKGSDAPSSPVPCSGDEVPNTSEDPPTGMGSSGETQAQISSQEGTEAHEARPEPDIEVRGSKDSLGGERSKVEEEERGDGPGASGTGNREKNTKKSDTTAGEAGESSELHQVDAEHKSKVQHRATEGPEAAGLTPKARLGDTPEAPPRSAQRRMGVRTQEEAPSDLNPPPAEPEEHLGDLRDARPAGQEKGSAEVRSKVPAIGRAGPEQGSSARAASAGPQVSCVQTVPSDGQGVKSRDQRAQEAEVGESRVLETEAEWVPWEVIGTSKTDAGIPESLDTEAGTAESEILEAQESEAARSEGLEPEAAGTAESEVLRTQNNEIVVLGMPRTGPEIREPEEFGETEVGGFTVPDTKTVIAETEILETQGVVDGEAAVLKTQAEISETQKTEAGEAEAGTLESQKVAAEGLGAPEVGAEMAEAEKLGVQETEVEIWRIPRIETETAGTETLGIHKIGPPQMQPRLVGDQETDVSVMETAEDAILGTREITAGCGVLLIEAKIPESKIDRSLETEEGDLGVLEVDTGIAEAKILGIPERAPGVQKALGAGTEVARVLEAEAASSEVPETDAEEAETLQAKERSESSVALRVVANLPESELLGTQKTEVGGTGISQREVREAETEIPKTQEISSEGSGVPDLEAKMEESGRKMEIWETPEVEKVNSELFGTQKGSEIPELETKTIKSEILDAQETEVRDLGLRRGEAEKAEAEMLETQKMEAKTARDEEIELVDPGVSSPEAEALRVQWAGTVVLESGEVKADILGVQKPGSWGALKYEALDVPVTKQRLSGAKEVVPEVPRAQEPETKVLGIVEAKSWTLGQQEAEMEGFESPENKSNIFEAQEADSGVLGTMKGKEAVESLEEAGLSKAQVASEAGAGVPRPSGASSLEEPEEDRRLPGSQAPPTLVSSSQSLLEWCQEVTNGYRGVCITNFTTSWRNGLAFCAILHRFYPDKIDYFSLDPLNIKQNNKQAFDGFAALGVSRLLEPADMVLLSVPDKLIVMTYLCQIRAFCTGQELQLVQLEGGGGSGTYRVGNAQPSLPDCLDAGDLAQRLREHGAEVPTEPKEAVNRGTGAIPKVASRDTDLSCSSKDGEAEVAQEAIPQEAPTDGPRARSSTTPVVPAEGLVNGVGASGGVRLRRSSVNGEAGPVPPPRAHGSFSHVRDADLLKKRRSRLRNSNSFSVDDQDSGAAVGAGPAGPGAVEGPNPASSPDANPLPAPVPQQPPGGPPPTEESSPSLGEEAGLQRFQDTSQYVCAELQALEQEQGQIDGRAAEVEKQLRSLMESGANRLQEEVLIQEWFTLVNKKNALIRRQDQLQLLIEEQDLERRFELLSRELRAMLAIEEWQKTVAQQHREQLLLEELVSLVNQRDELVRDLDQKERIALEEDERLERGLEQRRRKVSRQLSRRERCTLS</sequence>
<gene>
    <name type="primary">Ehbp1l1</name>
</gene>
<keyword id="KW-0025">Alternative splicing</keyword>
<keyword id="KW-0175">Coiled coil</keyword>
<keyword id="KW-0967">Endosome</keyword>
<keyword id="KW-0597">Phosphoprotein</keyword>
<keyword id="KW-1185">Reference proteome</keyword>
<name>EH1L1_MOUSE</name>
<evidence type="ECO:0000250" key="1">
    <source>
        <dbReference type="UniProtKB" id="Q8N3D4"/>
    </source>
</evidence>
<evidence type="ECO:0000255" key="2"/>
<evidence type="ECO:0000255" key="3">
    <source>
        <dbReference type="PROSITE-ProRule" id="PRU00044"/>
    </source>
</evidence>
<evidence type="ECO:0000255" key="4">
    <source>
        <dbReference type="PROSITE-ProRule" id="PRU01186"/>
    </source>
</evidence>
<evidence type="ECO:0000255" key="5">
    <source>
        <dbReference type="PROSITE-ProRule" id="PRU01195"/>
    </source>
</evidence>
<evidence type="ECO:0000256" key="6">
    <source>
        <dbReference type="SAM" id="MobiDB-lite"/>
    </source>
</evidence>
<evidence type="ECO:0000269" key="7">
    <source>
    </source>
</evidence>
<evidence type="ECO:0000303" key="8">
    <source>
    </source>
</evidence>
<evidence type="ECO:0000303" key="9">
    <source>
    </source>
</evidence>
<evidence type="ECO:0000303" key="10">
    <source ref="1"/>
</evidence>
<evidence type="ECO:0000305" key="11"/>
<evidence type="ECO:0007744" key="12">
    <source>
    </source>
</evidence>
<evidence type="ECO:0007744" key="13">
    <source>
    </source>
</evidence>
<accession>Q99MS7</accession>
<accession>Q3V443</accession>
<accession>Q8C2W6</accession>
<accession>Q99J97</accession>
<accession>Q99MS5</accession>
<accession>Q99MS6</accession>
<comment type="function">
    <text evidence="1">May act as Rab effector protein and play a role in vesicle trafficking (By similarity). Involved in apical-directed transport in polarized epithelial cells; the functions seems to implicate Rab8, BIN1 and possibly DNM1 (PubMed:26833786).</text>
</comment>
<comment type="subunit">
    <text evidence="1 7">Interacts with RAB8A, RAB8B, RAB10, RAB13 and RAB15 (in their GTP-bound forms); at least in case of RAB8A can bind 2 molecules of RAB8A simultaneously. Interacts with BIN1 and AMPH. Interacts with DNM1.</text>
</comment>
<comment type="subcellular location">
    <subcellularLocation>
        <location evidence="1">Endosome</location>
    </subcellularLocation>
    <subcellularLocation>
        <location evidence="7">Recycling endosome</location>
    </subcellularLocation>
</comment>
<comment type="alternative products">
    <event type="alternative splicing"/>
    <isoform>
        <id>Q99MS7-1</id>
        <name>1</name>
        <name>Tangerin A</name>
        <sequence type="displayed"/>
    </isoform>
    <isoform>
        <id>Q99MS7-2</id>
        <name>2</name>
        <sequence type="described" ref="VSP_024839 VSP_024840"/>
    </isoform>
    <isoform>
        <id>Q99MS7-3</id>
        <name>3</name>
        <name>Tangerin B</name>
        <sequence type="described" ref="VSP_024839"/>
    </isoform>
    <isoform>
        <id>Q99MS7-4</id>
        <name>4</name>
        <name>Tangerin C</name>
        <sequence type="described" ref="VSP_024838"/>
    </isoform>
    <isoform>
        <id>Q99MS7-5</id>
        <name>5</name>
        <name>Tangerin C'</name>
        <sequence type="described" ref="VSP_024837 VSP_024838"/>
    </isoform>
</comment>
<comment type="domain">
    <text evidence="1">The CAAX motif is a signal for prenylation and required for endosomal colocalization with Rab8 and Rab10.</text>
</comment>
<comment type="domain">
    <text evidence="1">The bivalent Mical/EHBP Rab binding (bMERB) domain, mediates binding to Rab8, Rab10, Rab10, Rab13 and Rab15 (in their GTP-bound forms).</text>
</comment>
<comment type="PTM">
    <text evidence="1">Prenylated (Probable). Farnelysation (predominant) and geranylgeranylation has been observed in vitro.</text>
</comment>
<protein>
    <recommendedName>
        <fullName>EH domain-binding protein 1-like protein 1</fullName>
    </recommendedName>
    <alternativeName>
        <fullName>Tangerin</fullName>
    </alternativeName>
</protein>